<accession>Q8PU79</accession>
<feature type="chain" id="PRO_0000137350" description="Small ribosomal subunit protein eS6">
    <location>
        <begin position="1"/>
        <end position="136"/>
    </location>
</feature>
<dbReference type="EMBL" id="AE008384">
    <property type="protein sequence ID" value="AAM32158.1"/>
    <property type="molecule type" value="Genomic_DNA"/>
</dbReference>
<dbReference type="RefSeq" id="WP_011034380.1">
    <property type="nucleotide sequence ID" value="NC_003901.1"/>
</dbReference>
<dbReference type="SMR" id="Q8PU79"/>
<dbReference type="KEGG" id="mma:MM_2462"/>
<dbReference type="PATRIC" id="fig|192952.21.peg.2817"/>
<dbReference type="eggNOG" id="arCOG01946">
    <property type="taxonomic scope" value="Archaea"/>
</dbReference>
<dbReference type="HOGENOM" id="CLU_109671_1_1_2"/>
<dbReference type="Proteomes" id="UP000000595">
    <property type="component" value="Chromosome"/>
</dbReference>
<dbReference type="GO" id="GO:1990904">
    <property type="term" value="C:ribonucleoprotein complex"/>
    <property type="evidence" value="ECO:0007669"/>
    <property type="project" value="UniProtKB-KW"/>
</dbReference>
<dbReference type="GO" id="GO:0005840">
    <property type="term" value="C:ribosome"/>
    <property type="evidence" value="ECO:0007669"/>
    <property type="project" value="UniProtKB-KW"/>
</dbReference>
<dbReference type="GO" id="GO:0003735">
    <property type="term" value="F:structural constituent of ribosome"/>
    <property type="evidence" value="ECO:0007669"/>
    <property type="project" value="InterPro"/>
</dbReference>
<dbReference type="GO" id="GO:0006412">
    <property type="term" value="P:translation"/>
    <property type="evidence" value="ECO:0007669"/>
    <property type="project" value="UniProtKB-UniRule"/>
</dbReference>
<dbReference type="HAMAP" id="MF_00512">
    <property type="entry name" value="Ribosomal_eS6"/>
    <property type="match status" value="1"/>
</dbReference>
<dbReference type="InterPro" id="IPR001377">
    <property type="entry name" value="Ribosomal_eS6"/>
</dbReference>
<dbReference type="InterPro" id="IPR020924">
    <property type="entry name" value="Ribosomal_eS6_arc"/>
</dbReference>
<dbReference type="InterPro" id="IPR018282">
    <property type="entry name" value="Ribosomal_eS6_CS"/>
</dbReference>
<dbReference type="NCBIfam" id="NF003294">
    <property type="entry name" value="PRK04290.1-3"/>
    <property type="match status" value="1"/>
</dbReference>
<dbReference type="PANTHER" id="PTHR11502">
    <property type="entry name" value="40S RIBOSOMAL PROTEIN S6"/>
    <property type="match status" value="1"/>
</dbReference>
<dbReference type="Pfam" id="PF01092">
    <property type="entry name" value="Ribosomal_S6e"/>
    <property type="match status" value="1"/>
</dbReference>
<dbReference type="SMART" id="SM01405">
    <property type="entry name" value="Ribosomal_S6e"/>
    <property type="match status" value="1"/>
</dbReference>
<dbReference type="PROSITE" id="PS00578">
    <property type="entry name" value="RIBOSOMAL_S6E"/>
    <property type="match status" value="1"/>
</dbReference>
<gene>
    <name evidence="1" type="primary">rps6e</name>
    <name type="ordered locus">MM_2462</name>
</gene>
<name>RS6E_METMA</name>
<protein>
    <recommendedName>
        <fullName evidence="1">Small ribosomal subunit protein eS6</fullName>
    </recommendedName>
    <alternativeName>
        <fullName evidence="2">30S ribosomal protein S6e</fullName>
    </alternativeName>
</protein>
<comment type="similarity">
    <text evidence="1">Belongs to the eukaryotic ribosomal protein eS6 family.</text>
</comment>
<sequence>MANFKVVVSDPKEARAYQIDIKDAEANALIGKSIGDVVDGSIFGLAGYKVQITGGCDGSGFVMKPDLPGPRRQRILTATGVGYVPKLPGQRRRKMMRGKEIAPDIVQVNAKVVEYGSKSIKALLGLETAEEAPAAE</sequence>
<proteinExistence type="inferred from homology"/>
<evidence type="ECO:0000255" key="1">
    <source>
        <dbReference type="HAMAP-Rule" id="MF_00512"/>
    </source>
</evidence>
<evidence type="ECO:0000305" key="2"/>
<reference key="1">
    <citation type="journal article" date="2002" name="J. Mol. Microbiol. Biotechnol.">
        <title>The genome of Methanosarcina mazei: evidence for lateral gene transfer between Bacteria and Archaea.</title>
        <authorList>
            <person name="Deppenmeier U."/>
            <person name="Johann A."/>
            <person name="Hartsch T."/>
            <person name="Merkl R."/>
            <person name="Schmitz R.A."/>
            <person name="Martinez-Arias R."/>
            <person name="Henne A."/>
            <person name="Wiezer A."/>
            <person name="Baeumer S."/>
            <person name="Jacobi C."/>
            <person name="Brueggemann H."/>
            <person name="Lienard T."/>
            <person name="Christmann A."/>
            <person name="Boemecke M."/>
            <person name="Steckel S."/>
            <person name="Bhattacharyya A."/>
            <person name="Lykidis A."/>
            <person name="Overbeek R."/>
            <person name="Klenk H.-P."/>
            <person name="Gunsalus R.P."/>
            <person name="Fritz H.-J."/>
            <person name="Gottschalk G."/>
        </authorList>
    </citation>
    <scope>NUCLEOTIDE SEQUENCE [LARGE SCALE GENOMIC DNA]</scope>
    <source>
        <strain>ATCC BAA-159 / DSM 3647 / Goe1 / Go1 / JCM 11833 / OCM 88</strain>
    </source>
</reference>
<organism>
    <name type="scientific">Methanosarcina mazei (strain ATCC BAA-159 / DSM 3647 / Goe1 / Go1 / JCM 11833 / OCM 88)</name>
    <name type="common">Methanosarcina frisia</name>
    <dbReference type="NCBI Taxonomy" id="192952"/>
    <lineage>
        <taxon>Archaea</taxon>
        <taxon>Methanobacteriati</taxon>
        <taxon>Methanobacteriota</taxon>
        <taxon>Stenosarchaea group</taxon>
        <taxon>Methanomicrobia</taxon>
        <taxon>Methanosarcinales</taxon>
        <taxon>Methanosarcinaceae</taxon>
        <taxon>Methanosarcina</taxon>
    </lineage>
</organism>
<keyword id="KW-0687">Ribonucleoprotein</keyword>
<keyword id="KW-0689">Ribosomal protein</keyword>